<name>RL32_CERS1</name>
<comment type="similarity">
    <text evidence="1">Belongs to the bacterial ribosomal protein bL32 family.</text>
</comment>
<sequence length="68" mass="7472">MAVPQNRVTRSRRNMRRSHDALVASNPAECPNCGELKRPHHVCGACGHYDSREVVAVTAETDLDEDAA</sequence>
<gene>
    <name evidence="1" type="primary">rpmF</name>
    <name type="ordered locus">Rsph17029_1272</name>
</gene>
<protein>
    <recommendedName>
        <fullName evidence="1">Large ribosomal subunit protein bL32</fullName>
    </recommendedName>
    <alternativeName>
        <fullName evidence="3">50S ribosomal protein L32</fullName>
    </alternativeName>
</protein>
<feature type="chain" id="PRO_0000296543" description="Large ribosomal subunit protein bL32">
    <location>
        <begin position="1"/>
        <end position="68"/>
    </location>
</feature>
<feature type="region of interest" description="Disordered" evidence="2">
    <location>
        <begin position="1"/>
        <end position="20"/>
    </location>
</feature>
<proteinExistence type="inferred from homology"/>
<accession>A3PJ66</accession>
<organism>
    <name type="scientific">Cereibacter sphaeroides (strain ATCC 17029 / ATH 2.4.9)</name>
    <name type="common">Rhodobacter sphaeroides</name>
    <dbReference type="NCBI Taxonomy" id="349101"/>
    <lineage>
        <taxon>Bacteria</taxon>
        <taxon>Pseudomonadati</taxon>
        <taxon>Pseudomonadota</taxon>
        <taxon>Alphaproteobacteria</taxon>
        <taxon>Rhodobacterales</taxon>
        <taxon>Paracoccaceae</taxon>
        <taxon>Cereibacter</taxon>
    </lineage>
</organism>
<evidence type="ECO:0000255" key="1">
    <source>
        <dbReference type="HAMAP-Rule" id="MF_00340"/>
    </source>
</evidence>
<evidence type="ECO:0000256" key="2">
    <source>
        <dbReference type="SAM" id="MobiDB-lite"/>
    </source>
</evidence>
<evidence type="ECO:0000305" key="3"/>
<reference key="1">
    <citation type="submission" date="2007-02" db="EMBL/GenBank/DDBJ databases">
        <title>Complete sequence of chromosome 1 of Rhodobacter sphaeroides ATCC 17029.</title>
        <authorList>
            <person name="Copeland A."/>
            <person name="Lucas S."/>
            <person name="Lapidus A."/>
            <person name="Barry K."/>
            <person name="Detter J.C."/>
            <person name="Glavina del Rio T."/>
            <person name="Hammon N."/>
            <person name="Israni S."/>
            <person name="Dalin E."/>
            <person name="Tice H."/>
            <person name="Pitluck S."/>
            <person name="Kiss H."/>
            <person name="Brettin T."/>
            <person name="Bruce D."/>
            <person name="Han C."/>
            <person name="Tapia R."/>
            <person name="Gilna P."/>
            <person name="Schmutz J."/>
            <person name="Larimer F."/>
            <person name="Land M."/>
            <person name="Hauser L."/>
            <person name="Kyrpides N."/>
            <person name="Mikhailova N."/>
            <person name="Richardson P."/>
            <person name="Mackenzie C."/>
            <person name="Choudhary M."/>
            <person name="Donohue T.J."/>
            <person name="Kaplan S."/>
        </authorList>
    </citation>
    <scope>NUCLEOTIDE SEQUENCE [LARGE SCALE GENOMIC DNA]</scope>
    <source>
        <strain>ATCC 17029 / ATH 2.4.9</strain>
    </source>
</reference>
<keyword id="KW-0687">Ribonucleoprotein</keyword>
<keyword id="KW-0689">Ribosomal protein</keyword>
<dbReference type="EMBL" id="CP000577">
    <property type="protein sequence ID" value="ABN76382.1"/>
    <property type="molecule type" value="Genomic_DNA"/>
</dbReference>
<dbReference type="RefSeq" id="WP_002719763.1">
    <property type="nucleotide sequence ID" value="NC_009049.1"/>
</dbReference>
<dbReference type="SMR" id="A3PJ66"/>
<dbReference type="GeneID" id="67446366"/>
<dbReference type="KEGG" id="rsh:Rsph17029_1272"/>
<dbReference type="HOGENOM" id="CLU_129084_1_3_5"/>
<dbReference type="GO" id="GO:0015934">
    <property type="term" value="C:large ribosomal subunit"/>
    <property type="evidence" value="ECO:0007669"/>
    <property type="project" value="InterPro"/>
</dbReference>
<dbReference type="GO" id="GO:0003735">
    <property type="term" value="F:structural constituent of ribosome"/>
    <property type="evidence" value="ECO:0007669"/>
    <property type="project" value="InterPro"/>
</dbReference>
<dbReference type="GO" id="GO:0006412">
    <property type="term" value="P:translation"/>
    <property type="evidence" value="ECO:0007669"/>
    <property type="project" value="UniProtKB-UniRule"/>
</dbReference>
<dbReference type="Gene3D" id="1.20.5.640">
    <property type="entry name" value="Single helix bin"/>
    <property type="match status" value="1"/>
</dbReference>
<dbReference type="HAMAP" id="MF_00340">
    <property type="entry name" value="Ribosomal_bL32"/>
    <property type="match status" value="1"/>
</dbReference>
<dbReference type="InterPro" id="IPR002677">
    <property type="entry name" value="Ribosomal_bL32"/>
</dbReference>
<dbReference type="InterPro" id="IPR044957">
    <property type="entry name" value="Ribosomal_bL32_bact"/>
</dbReference>
<dbReference type="InterPro" id="IPR011332">
    <property type="entry name" value="Ribosomal_zn-bd"/>
</dbReference>
<dbReference type="NCBIfam" id="TIGR01031">
    <property type="entry name" value="rpmF_bact"/>
    <property type="match status" value="1"/>
</dbReference>
<dbReference type="PANTHER" id="PTHR35534">
    <property type="entry name" value="50S RIBOSOMAL PROTEIN L32"/>
    <property type="match status" value="1"/>
</dbReference>
<dbReference type="PANTHER" id="PTHR35534:SF1">
    <property type="entry name" value="LARGE RIBOSOMAL SUBUNIT PROTEIN BL32"/>
    <property type="match status" value="1"/>
</dbReference>
<dbReference type="Pfam" id="PF01783">
    <property type="entry name" value="Ribosomal_L32p"/>
    <property type="match status" value="1"/>
</dbReference>
<dbReference type="SUPFAM" id="SSF57829">
    <property type="entry name" value="Zn-binding ribosomal proteins"/>
    <property type="match status" value="1"/>
</dbReference>